<proteinExistence type="evidence at protein level"/>
<feature type="signal peptide" evidence="4">
    <location>
        <begin position="1"/>
        <end position="18"/>
    </location>
</feature>
<feature type="chain" id="PRO_0000430750" description="L-amino acid oxidase Lm29">
    <location>
        <begin position="19"/>
        <end position="516"/>
    </location>
</feature>
<feature type="binding site" evidence="2">
    <location>
        <begin position="61"/>
        <end position="62"/>
    </location>
    <ligand>
        <name>FAD</name>
        <dbReference type="ChEBI" id="CHEBI:57692"/>
    </ligand>
</feature>
<feature type="binding site" evidence="2">
    <location>
        <begin position="81"/>
        <end position="82"/>
    </location>
    <ligand>
        <name>FAD</name>
        <dbReference type="ChEBI" id="CHEBI:57692"/>
    </ligand>
</feature>
<feature type="binding site" evidence="2">
    <location>
        <position position="89"/>
    </location>
    <ligand>
        <name>FAD</name>
        <dbReference type="ChEBI" id="CHEBI:57692"/>
    </ligand>
</feature>
<feature type="binding site" evidence="2">
    <location>
        <begin position="105"/>
        <end position="108"/>
    </location>
    <ligand>
        <name>FAD</name>
        <dbReference type="ChEBI" id="CHEBI:57692"/>
    </ligand>
</feature>
<feature type="binding site" evidence="2">
    <location>
        <position position="108"/>
    </location>
    <ligand>
        <name>substrate</name>
    </ligand>
</feature>
<feature type="binding site" evidence="2">
    <location>
        <position position="241"/>
    </location>
    <ligand>
        <name>substrate</name>
    </ligand>
</feature>
<feature type="binding site" evidence="2">
    <location>
        <position position="279"/>
    </location>
    <ligand>
        <name>FAD</name>
        <dbReference type="ChEBI" id="CHEBI:57692"/>
    </ligand>
</feature>
<feature type="binding site" evidence="2">
    <location>
        <position position="390"/>
    </location>
    <ligand>
        <name>substrate</name>
    </ligand>
</feature>
<feature type="binding site" evidence="2">
    <location>
        <position position="475"/>
    </location>
    <ligand>
        <name>FAD</name>
        <dbReference type="ChEBI" id="CHEBI:57692"/>
    </ligand>
</feature>
<feature type="binding site" evidence="2">
    <location>
        <begin position="482"/>
        <end position="487"/>
    </location>
    <ligand>
        <name>FAD</name>
        <dbReference type="ChEBI" id="CHEBI:57692"/>
    </ligand>
</feature>
<feature type="binding site" evidence="2">
    <location>
        <begin position="482"/>
        <end position="483"/>
    </location>
    <ligand>
        <name>substrate</name>
    </ligand>
</feature>
<feature type="glycosylation site" description="N-linked (GlcNAc...) asparagine" evidence="3">
    <location>
        <position position="190"/>
    </location>
</feature>
<feature type="glycosylation site" description="N-linked (GlcNAc...) asparagine" evidence="3">
    <location>
        <position position="379"/>
    </location>
</feature>
<feature type="disulfide bond" evidence="2">
    <location>
        <begin position="28"/>
        <end position="191"/>
    </location>
</feature>
<feature type="disulfide bond" evidence="2">
    <location>
        <begin position="349"/>
        <end position="430"/>
    </location>
</feature>
<feature type="sequence conflict" description="In Ref. 1; AA sequence." ref="1">
    <location>
        <position position="57"/>
    </location>
</feature>
<comment type="function">
    <text evidence="4">Catalyzes an oxidative deamination of predominantly hydrophobic and aromatic L-amino acids, thus producing hydrogen peroxide that may contribute to the diverse toxic effects of this enzyme (PubMed:22963728). Is highly active on L-Met=L-Leu&gt;&gt;L-Phe&gt;L-Trp&gt;L-Tyr&gt;L-Ile, and weakly or not active on L-His, L-Arg, L-Val, L-Gln, L-Thr, L-Lys, and L-Ser (PubMed:22963728). Exhibits a low myotoxicity (a mild myonecrosis is observed after injection in mice quadriceps muscle) (PubMed:22963728). In vitro, is cytotoxic to a lot of human cell lines, including AGS (IC(50)=22.7 ug/ml), MCF-7 (IC(50)=1.4 ug/ml), HL-60, HeLa and Jurkat cells, as well as to the parasite Leishmania brasiliensis (IC(50)=2.22 ug/ml) (PubMed:22963728). This cytotoxicity is dependent on the production of hydrogen peroxyde, since it is inhibited by catalase, a hydrogen peroxyde scavenger (PubMed:22963728).</text>
</comment>
<comment type="catalytic activity">
    <reaction evidence="4">
        <text>an L-alpha-amino acid + O2 + H2O = a 2-oxocarboxylate + H2O2 + NH4(+)</text>
        <dbReference type="Rhea" id="RHEA:13781"/>
        <dbReference type="ChEBI" id="CHEBI:15377"/>
        <dbReference type="ChEBI" id="CHEBI:15379"/>
        <dbReference type="ChEBI" id="CHEBI:16240"/>
        <dbReference type="ChEBI" id="CHEBI:28938"/>
        <dbReference type="ChEBI" id="CHEBI:35179"/>
        <dbReference type="ChEBI" id="CHEBI:59869"/>
        <dbReference type="EC" id="1.4.3.2"/>
    </reaction>
</comment>
<comment type="catalytic activity">
    <reaction evidence="4">
        <text>L-leucine + O2 + H2O = 4-methyl-2-oxopentanoate + H2O2 + NH4(+)</text>
        <dbReference type="Rhea" id="RHEA:60996"/>
        <dbReference type="ChEBI" id="CHEBI:15377"/>
        <dbReference type="ChEBI" id="CHEBI:15379"/>
        <dbReference type="ChEBI" id="CHEBI:16240"/>
        <dbReference type="ChEBI" id="CHEBI:17865"/>
        <dbReference type="ChEBI" id="CHEBI:28938"/>
        <dbReference type="ChEBI" id="CHEBI:57427"/>
    </reaction>
</comment>
<comment type="catalytic activity">
    <reaction evidence="4">
        <text>L-phenylalanine + O2 + H2O = 3-phenylpyruvate + H2O2 + NH4(+)</text>
        <dbReference type="Rhea" id="RHEA:61240"/>
        <dbReference type="ChEBI" id="CHEBI:15377"/>
        <dbReference type="ChEBI" id="CHEBI:15379"/>
        <dbReference type="ChEBI" id="CHEBI:16240"/>
        <dbReference type="ChEBI" id="CHEBI:18005"/>
        <dbReference type="ChEBI" id="CHEBI:28938"/>
        <dbReference type="ChEBI" id="CHEBI:58095"/>
    </reaction>
</comment>
<comment type="catalytic activity">
    <reaction evidence="4">
        <text>L-tryptophan + O2 + H2O = indole-3-pyruvate + H2O2 + NH4(+)</text>
        <dbReference type="Rhea" id="RHEA:61244"/>
        <dbReference type="ChEBI" id="CHEBI:15377"/>
        <dbReference type="ChEBI" id="CHEBI:15379"/>
        <dbReference type="ChEBI" id="CHEBI:16240"/>
        <dbReference type="ChEBI" id="CHEBI:17640"/>
        <dbReference type="ChEBI" id="CHEBI:28938"/>
        <dbReference type="ChEBI" id="CHEBI:57912"/>
    </reaction>
</comment>
<comment type="catalytic activity">
    <reaction evidence="4">
        <text>L-methionine + O2 + H2O = 4-methylsulfanyl-2-oxobutanoate + H2O2 + NH4(+)</text>
        <dbReference type="Rhea" id="RHEA:61236"/>
        <dbReference type="ChEBI" id="CHEBI:15377"/>
        <dbReference type="ChEBI" id="CHEBI:15379"/>
        <dbReference type="ChEBI" id="CHEBI:16240"/>
        <dbReference type="ChEBI" id="CHEBI:16723"/>
        <dbReference type="ChEBI" id="CHEBI:28938"/>
        <dbReference type="ChEBI" id="CHEBI:57844"/>
    </reaction>
</comment>
<comment type="catalytic activity">
    <reaction evidence="4">
        <text>L-isoleucine + O2 + H2O = (S)-3-methyl-2-oxopentanoate + H2O2 + NH4(+)</text>
        <dbReference type="Rhea" id="RHEA:61232"/>
        <dbReference type="ChEBI" id="CHEBI:15377"/>
        <dbReference type="ChEBI" id="CHEBI:15379"/>
        <dbReference type="ChEBI" id="CHEBI:16240"/>
        <dbReference type="ChEBI" id="CHEBI:28938"/>
        <dbReference type="ChEBI" id="CHEBI:35146"/>
        <dbReference type="ChEBI" id="CHEBI:58045"/>
    </reaction>
</comment>
<comment type="catalytic activity">
    <reaction evidence="4">
        <text>L-tyrosine + O2 + H2O = 3-(4-hydroxyphenyl)pyruvate + H2O2 + NH4(+)</text>
        <dbReference type="Rhea" id="RHEA:61248"/>
        <dbReference type="ChEBI" id="CHEBI:15377"/>
        <dbReference type="ChEBI" id="CHEBI:15379"/>
        <dbReference type="ChEBI" id="CHEBI:16240"/>
        <dbReference type="ChEBI" id="CHEBI:28938"/>
        <dbReference type="ChEBI" id="CHEBI:36242"/>
        <dbReference type="ChEBI" id="CHEBI:58315"/>
    </reaction>
</comment>
<comment type="cofactor">
    <cofactor evidence="7">
        <name>FAD</name>
        <dbReference type="ChEBI" id="CHEBI:57692"/>
    </cofactor>
</comment>
<comment type="biophysicochemical properties">
    <kinetics>
        <KM evidence="4">0.97 mM for L-Leu</KM>
        <Vmax evidence="4">0.063 umol/min/mg enzyme for L-Leu</Vmax>
    </kinetics>
    <phDependence>
        <text evidence="4">Optimum pH is 8.0 for L-Leu.</text>
    </phDependence>
    <temperatureDependence>
        <text evidence="4">Optimum temperature is 4 degrees Celsius.</text>
    </temperatureDependence>
</comment>
<comment type="subunit">
    <text evidence="2">Homodimer; non-covalently linked.</text>
</comment>
<comment type="subcellular location">
    <subcellularLocation>
        <location evidence="4">Secreted</location>
    </subcellularLocation>
</comment>
<comment type="tissue specificity">
    <text evidence="7">Expressed by the venom gland.</text>
</comment>
<comment type="mass spectrometry"/>
<comment type="miscellaneous">
    <text evidence="4">Negative results: this enzyme does not cause hemorrhage, paw edema morphological changes of heart, lung and kidney when injected into mice. Is not toxic to the parasite Trypanosoma cruzi.</text>
</comment>
<comment type="similarity">
    <text evidence="1">Belongs to the flavin monoamine oxidase family. FIG1 subfamily.</text>
</comment>
<organism>
    <name type="scientific">Lachesis muta</name>
    <name type="common">South American bushmaster</name>
    <dbReference type="NCBI Taxonomy" id="8752"/>
    <lineage>
        <taxon>Eukaryota</taxon>
        <taxon>Metazoa</taxon>
        <taxon>Chordata</taxon>
        <taxon>Craniata</taxon>
        <taxon>Vertebrata</taxon>
        <taxon>Euteleostomi</taxon>
        <taxon>Lepidosauria</taxon>
        <taxon>Squamata</taxon>
        <taxon>Bifurcata</taxon>
        <taxon>Unidentata</taxon>
        <taxon>Episquamata</taxon>
        <taxon>Toxicofera</taxon>
        <taxon>Serpentes</taxon>
        <taxon>Colubroidea</taxon>
        <taxon>Viperidae</taxon>
        <taxon>Crotalinae</taxon>
        <taxon>Lachesis</taxon>
    </lineage>
</organism>
<protein>
    <recommendedName>
        <fullName evidence="5">L-amino acid oxidase Lm29</fullName>
    </recommendedName>
    <alternativeName>
        <fullName evidence="6">LmLAAO</fullName>
        <shortName>LAO</shortName>
        <ecNumber evidence="4">1.4.3.2</ecNumber>
    </alternativeName>
</protein>
<evidence type="ECO:0000250" key="1">
    <source>
        <dbReference type="UniProtKB" id="B0VXW0"/>
    </source>
</evidence>
<evidence type="ECO:0000250" key="2">
    <source>
        <dbReference type="UniProtKB" id="P81382"/>
    </source>
</evidence>
<evidence type="ECO:0000255" key="3">
    <source>
        <dbReference type="PROSITE-ProRule" id="PRU00498"/>
    </source>
</evidence>
<evidence type="ECO:0000269" key="4">
    <source>
    </source>
</evidence>
<evidence type="ECO:0000303" key="5">
    <source>
    </source>
</evidence>
<evidence type="ECO:0000303" key="6">
    <source>
    </source>
</evidence>
<evidence type="ECO:0000305" key="7">
    <source>
    </source>
</evidence>
<reference key="1">
    <citation type="journal article" date="2012" name="Toxicon">
        <title>Isolation and biochemical, functional and structural characterization of a novel l-amino acid oxidase from Lachesis muta snake venom.</title>
        <authorList>
            <person name="Bregge-Silva C."/>
            <person name="Nonato M.C."/>
            <person name="de Albuquerque S."/>
            <person name="Ho P.L."/>
            <person name="Junqueira de Azevedo I.L."/>
            <person name="Vasconcelos Diniz M.R."/>
            <person name="Lomonte B."/>
            <person name="Rucavado A."/>
            <person name="Diaz C."/>
            <person name="Gutierrez J.M."/>
            <person name="Arantes E.C."/>
        </authorList>
    </citation>
    <scope>NUCLEOTIDE SEQUENCE [MRNA]</scope>
    <scope>PROTEIN SEQUENCE OF 19-59</scope>
    <scope>CATALYTIC ACTIVITY</scope>
    <scope>SUBSTRATE SPECIFICITY</scope>
    <scope>FUNCTION</scope>
    <scope>MASS SPECTROMETRY</scope>
    <scope>SUBCELLULAR LOCATION</scope>
    <scope>BIOPHYSICOCHEMICAL PROPERTIES</scope>
    <scope>SUBUNIT</scope>
    <scope>3D-STRUCTURE MODELING</scope>
    <source>
        <tissue>Venom</tissue>
        <tissue>Venom gland</tissue>
    </source>
</reference>
<reference key="2">
    <citation type="journal article" date="2008" name="J. Proteomics">
        <title>Snake venomics of the South and Central American Bushmasters. Comparison of the toxin composition of Lachesis muta gathered from proteomic versus transcriptomic analysis.</title>
        <authorList>
            <person name="Sanz L."/>
            <person name="Escolano J."/>
            <person name="Ferretti M."/>
            <person name="Biscoglio M.J."/>
            <person name="Rivera E."/>
            <person name="Crescenti E.J."/>
            <person name="Angulo Y."/>
            <person name="Lomonte B."/>
            <person name="Gutierrez J.M."/>
            <person name="Calvete J.J."/>
        </authorList>
    </citation>
    <scope>PROTEIN SEQUENCE OF 19-42</scope>
    <scope>IDENTIFICATION BY MASS SPECTROMETRY</scope>
    <source>
        <tissue>Venom</tissue>
    </source>
</reference>
<name>OXLA_LACMT</name>
<keyword id="KW-0903">Direct protein sequencing</keyword>
<keyword id="KW-1015">Disulfide bond</keyword>
<keyword id="KW-0274">FAD</keyword>
<keyword id="KW-0285">Flavoprotein</keyword>
<keyword id="KW-0325">Glycoprotein</keyword>
<keyword id="KW-0959">Myotoxin</keyword>
<keyword id="KW-0560">Oxidoreductase</keyword>
<keyword id="KW-0964">Secreted</keyword>
<keyword id="KW-0732">Signal</keyword>
<keyword id="KW-0800">Toxin</keyword>
<accession>J7H670</accession>
<dbReference type="EC" id="1.4.3.2" evidence="4"/>
<dbReference type="EMBL" id="JX171244">
    <property type="protein sequence ID" value="AFP89360.1"/>
    <property type="molecule type" value="mRNA"/>
</dbReference>
<dbReference type="SMR" id="J7H670"/>
<dbReference type="GO" id="GO:0005576">
    <property type="term" value="C:extracellular region"/>
    <property type="evidence" value="ECO:0007669"/>
    <property type="project" value="UniProtKB-SubCell"/>
</dbReference>
<dbReference type="GO" id="GO:0106329">
    <property type="term" value="F:L-phenylalaine oxidase activity"/>
    <property type="evidence" value="ECO:0007669"/>
    <property type="project" value="RHEA"/>
</dbReference>
<dbReference type="GO" id="GO:0090729">
    <property type="term" value="F:toxin activity"/>
    <property type="evidence" value="ECO:0007669"/>
    <property type="project" value="UniProtKB-KW"/>
</dbReference>
<dbReference type="GO" id="GO:0009063">
    <property type="term" value="P:amino acid catabolic process"/>
    <property type="evidence" value="ECO:0007669"/>
    <property type="project" value="TreeGrafter"/>
</dbReference>
<dbReference type="FunFam" id="1.10.405.10:FF:000004">
    <property type="entry name" value="Amine oxidase"/>
    <property type="match status" value="1"/>
</dbReference>
<dbReference type="FunFam" id="3.50.50.60:FF:000450">
    <property type="entry name" value="Amine oxidase"/>
    <property type="match status" value="1"/>
</dbReference>
<dbReference type="Gene3D" id="3.90.660.10">
    <property type="match status" value="1"/>
</dbReference>
<dbReference type="Gene3D" id="3.50.50.60">
    <property type="entry name" value="FAD/NAD(P)-binding domain"/>
    <property type="match status" value="1"/>
</dbReference>
<dbReference type="Gene3D" id="1.10.405.10">
    <property type="entry name" value="Guanine Nucleotide Dissociation Inhibitor, domain 1"/>
    <property type="match status" value="1"/>
</dbReference>
<dbReference type="InterPro" id="IPR002937">
    <property type="entry name" value="Amino_oxidase"/>
</dbReference>
<dbReference type="InterPro" id="IPR036188">
    <property type="entry name" value="FAD/NAD-bd_sf"/>
</dbReference>
<dbReference type="InterPro" id="IPR050281">
    <property type="entry name" value="Flavin_monoamine_oxidase"/>
</dbReference>
<dbReference type="PANTHER" id="PTHR10742:SF355">
    <property type="entry name" value="AMINE OXIDASE"/>
    <property type="match status" value="1"/>
</dbReference>
<dbReference type="PANTHER" id="PTHR10742">
    <property type="entry name" value="FLAVIN MONOAMINE OXIDASE"/>
    <property type="match status" value="1"/>
</dbReference>
<dbReference type="Pfam" id="PF01593">
    <property type="entry name" value="Amino_oxidase"/>
    <property type="match status" value="1"/>
</dbReference>
<dbReference type="SUPFAM" id="SSF54373">
    <property type="entry name" value="FAD-linked reductases, C-terminal domain"/>
    <property type="match status" value="1"/>
</dbReference>
<dbReference type="SUPFAM" id="SSF51905">
    <property type="entry name" value="FAD/NAD(P)-binding domain"/>
    <property type="match status" value="1"/>
</dbReference>
<sequence>MNVFFMFSLLFLAALGSCADDRNPLGECFRETDYEEFLEIAKNGLRATSNPKHVVIVGAGMSGLSAAYVLAEAGHQVTVLEASERAGGRVRTYRNDKEGWYANLGPMRLPEKHRIVREYIRKFGLQLNEFHQENDNAWHFIKNIRKRVGEVKEDPGLLQYPVKPSEEGKSAGQLYEESLGKVAEELKRTNCSYILNKYDTYSTKEYLLKEGNLSPGAVDMIGDLLNEDSGYYVSFIESLKHDDIFGYEKRFDEIVDGMDKLPTSMYQAIKEKVRFNARVIKIQQNDREVTVTYQTSANEMSPVTADYVIVCTTSRATRRITFEPPLPPKKAHALRSVHYRSGTKIFLTCTKKFWEDDGIRGGKSTTDLPSRFIYYPNHNFTSGVGVIIAYGIGDDANFFQALDFKDCGDIVINDLSLIHQLPKKDIQTFCYPSMIQRWSLDKYAMGGITTFTPYQFQHFSEALTAPFKRIYFAGEYTAQFHGWIDSTIKSGLTAARDVNRASENPSGIHLSNDNEL</sequence>